<protein>
    <recommendedName>
        <fullName>Profilin-3</fullName>
    </recommendedName>
    <alternativeName>
        <fullName>Pollen allergen Ole e 2</fullName>
    </alternativeName>
    <allergenName>Ole e 2</allergenName>
</protein>
<reference key="1">
    <citation type="journal article" date="2012" name="PLoS ONE">
        <title>Characterization of profilin polymorphism in pollen with a focus on multifunctionality.</title>
        <authorList>
            <person name="Jimenez-Lopez J.C."/>
            <person name="Morales S."/>
            <person name="Castro A.J."/>
            <person name="Volkmann D."/>
            <person name="Rodriguez-Garcia M.I."/>
            <person name="Alche Jde D."/>
        </authorList>
    </citation>
    <scope>NUCLEOTIDE SEQUENCE [MRNA]</scope>
    <scope>POLYMORPHISM</scope>
    <source>
        <strain>cv. Cornicabra</strain>
    </source>
</reference>
<reference key="2">
    <citation type="journal article" date="2013" name="PLoS ONE">
        <title>Analysis of the effects of polymorphism on pollen profilin structural functionality and the generation of conformational, T- and B-cell epitopes.</title>
        <authorList>
            <person name="Jimenez-Lopez J.C."/>
            <person name="Rodriguez-Garcia M.I."/>
            <person name="Alche J.D."/>
        </authorList>
    </citation>
    <scope>3D-STRUCTURE MODELING</scope>
    <scope>DISULFIDE BOND</scope>
</reference>
<accession>A4GDR4</accession>
<keyword id="KW-0009">Actin-binding</keyword>
<keyword id="KW-0020">Allergen</keyword>
<keyword id="KW-0963">Cytoplasm</keyword>
<keyword id="KW-0206">Cytoskeleton</keyword>
<keyword id="KW-1015">Disulfide bond</keyword>
<keyword id="KW-0597">Phosphoprotein</keyword>
<feature type="initiator methionine" description="Removed" evidence="1">
    <location>
        <position position="1"/>
    </location>
</feature>
<feature type="chain" id="PRO_0000425012" description="Profilin-3">
    <location>
        <begin position="2"/>
        <end position="134"/>
    </location>
</feature>
<feature type="short sequence motif" description="Involved in PIP2 interaction">
    <location>
        <begin position="84"/>
        <end position="100"/>
    </location>
</feature>
<feature type="modified residue" description="Phosphothreonine" evidence="1">
    <location>
        <position position="114"/>
    </location>
</feature>
<feature type="disulfide bond" evidence="3">
    <location>
        <begin position="13"/>
        <end position="118"/>
    </location>
</feature>
<dbReference type="EMBL" id="DQ138332">
    <property type="protein sequence ID" value="AAZ30410.1"/>
    <property type="molecule type" value="mRNA"/>
</dbReference>
<dbReference type="SMR" id="A4GDR4"/>
<dbReference type="Allergome" id="490">
    <property type="allergen name" value="Ole e 2"/>
</dbReference>
<dbReference type="GO" id="GO:0005938">
    <property type="term" value="C:cell cortex"/>
    <property type="evidence" value="ECO:0007669"/>
    <property type="project" value="TreeGrafter"/>
</dbReference>
<dbReference type="GO" id="GO:0005856">
    <property type="term" value="C:cytoskeleton"/>
    <property type="evidence" value="ECO:0007669"/>
    <property type="project" value="UniProtKB-SubCell"/>
</dbReference>
<dbReference type="GO" id="GO:0003785">
    <property type="term" value="F:actin monomer binding"/>
    <property type="evidence" value="ECO:0007669"/>
    <property type="project" value="TreeGrafter"/>
</dbReference>
<dbReference type="CDD" id="cd00148">
    <property type="entry name" value="PROF"/>
    <property type="match status" value="1"/>
</dbReference>
<dbReference type="FunFam" id="3.30.450.30:FF:000001">
    <property type="entry name" value="Profilin"/>
    <property type="match status" value="1"/>
</dbReference>
<dbReference type="Gene3D" id="3.30.450.30">
    <property type="entry name" value="Dynein light chain 2a, cytoplasmic"/>
    <property type="match status" value="1"/>
</dbReference>
<dbReference type="InterPro" id="IPR048278">
    <property type="entry name" value="PFN"/>
</dbReference>
<dbReference type="InterPro" id="IPR005455">
    <property type="entry name" value="PFN_euk"/>
</dbReference>
<dbReference type="InterPro" id="IPR036140">
    <property type="entry name" value="PFN_sf"/>
</dbReference>
<dbReference type="InterPro" id="IPR027310">
    <property type="entry name" value="Profilin_CS"/>
</dbReference>
<dbReference type="PANTHER" id="PTHR11604">
    <property type="entry name" value="PROFILIN"/>
    <property type="match status" value="1"/>
</dbReference>
<dbReference type="PANTHER" id="PTHR11604:SF25">
    <property type="entry name" value="PROFILIN-5"/>
    <property type="match status" value="1"/>
</dbReference>
<dbReference type="Pfam" id="PF00235">
    <property type="entry name" value="Profilin"/>
    <property type="match status" value="1"/>
</dbReference>
<dbReference type="PRINTS" id="PR00392">
    <property type="entry name" value="PROFILIN"/>
</dbReference>
<dbReference type="PRINTS" id="PR01640">
    <property type="entry name" value="PROFILINPLNT"/>
</dbReference>
<dbReference type="SMART" id="SM00392">
    <property type="entry name" value="PROF"/>
    <property type="match status" value="1"/>
</dbReference>
<dbReference type="SUPFAM" id="SSF55770">
    <property type="entry name" value="Profilin (actin-binding protein)"/>
    <property type="match status" value="1"/>
</dbReference>
<dbReference type="PROSITE" id="PS00414">
    <property type="entry name" value="PROFILIN"/>
    <property type="match status" value="1"/>
</dbReference>
<proteinExistence type="evidence at protein level"/>
<comment type="function">
    <text evidence="1">Binds to actin and affects the structure of the cytoskeleton. At high concentrations, profilin prevents the polymerization of actin, whereas it enhances it at low concentrations (By similarity).</text>
</comment>
<comment type="subunit">
    <text evidence="1">Occurs in many kinds of cells as a complex with monomeric actin in a 1:1 ratio.</text>
</comment>
<comment type="subcellular location">
    <subcellularLocation>
        <location evidence="1">Cytoplasm</location>
        <location evidence="1">Cytoskeleton</location>
    </subcellularLocation>
</comment>
<comment type="PTM">
    <text evidence="1">Phosphorylated by MAP kinases.</text>
</comment>
<comment type="polymorphism">
    <text>Several isoforms of the allergen exist due to polymorphism.</text>
</comment>
<comment type="allergen">
    <text>Causes an allergic reaction in human.</text>
</comment>
<comment type="miscellaneous">
    <text evidence="3">The variability of the residues taking part of IgE-binding epitopes might be responsible of the difference in cross-reactivity among olive pollen cultivars, and between distantly related pollen species, leading to a variable range of allergy reactions among atopic patients.</text>
</comment>
<comment type="similarity">
    <text evidence="2">Belongs to the profilin family.</text>
</comment>
<sequence length="134" mass="14481">MSWQTYVDDHLMCDIEGHEGHRLTAAAIVGHDGSVWAQSATFPQFKPEEMNGIMTDFNEPGHLAPTGLHLGGTKYMVIQGEAGAVIRGKKGSGGITIKKTGQALVFGIYEEPVTPGQCNMVVERLGDYHLEQGL</sequence>
<organism>
    <name type="scientific">Olea europaea</name>
    <name type="common">Common olive</name>
    <dbReference type="NCBI Taxonomy" id="4146"/>
    <lineage>
        <taxon>Eukaryota</taxon>
        <taxon>Viridiplantae</taxon>
        <taxon>Streptophyta</taxon>
        <taxon>Embryophyta</taxon>
        <taxon>Tracheophyta</taxon>
        <taxon>Spermatophyta</taxon>
        <taxon>Magnoliopsida</taxon>
        <taxon>eudicotyledons</taxon>
        <taxon>Gunneridae</taxon>
        <taxon>Pentapetalae</taxon>
        <taxon>asterids</taxon>
        <taxon>lamiids</taxon>
        <taxon>Lamiales</taxon>
        <taxon>Oleaceae</taxon>
        <taxon>Oleeae</taxon>
        <taxon>Olea</taxon>
    </lineage>
</organism>
<name>PROAU_OLEEU</name>
<evidence type="ECO:0000250" key="1"/>
<evidence type="ECO:0000305" key="2"/>
<evidence type="ECO:0000305" key="3">
    <source>
    </source>
</evidence>